<sequence length="201" mass="21963">MQTSPLLTQLMEALRCLPGVGPKSAQRMAFTLLQRDRSGGMRLAQALTRAMSEIGHCADCRTFTEQEVCNICSNPRRQENGQICVVESPADIYAIEQTGQFSGRYFVLMGHLSPLDGIGPDDIGLDRLEQRLAEEKITEVILATNPTVEGEATANYIAELCAQYDVEASRIAHGVPVGGELEMVDGTTLSHSLAGRHKIRF</sequence>
<name>RECR_ECO45</name>
<gene>
    <name evidence="1" type="primary">recR</name>
    <name type="ordered locus">ECS88_0469</name>
</gene>
<accession>B7MDZ4</accession>
<protein>
    <recommendedName>
        <fullName evidence="1">Recombination protein RecR</fullName>
    </recommendedName>
</protein>
<organism>
    <name type="scientific">Escherichia coli O45:K1 (strain S88 / ExPEC)</name>
    <dbReference type="NCBI Taxonomy" id="585035"/>
    <lineage>
        <taxon>Bacteria</taxon>
        <taxon>Pseudomonadati</taxon>
        <taxon>Pseudomonadota</taxon>
        <taxon>Gammaproteobacteria</taxon>
        <taxon>Enterobacterales</taxon>
        <taxon>Enterobacteriaceae</taxon>
        <taxon>Escherichia</taxon>
    </lineage>
</organism>
<keyword id="KW-0227">DNA damage</keyword>
<keyword id="KW-0233">DNA recombination</keyword>
<keyword id="KW-0234">DNA repair</keyword>
<keyword id="KW-0479">Metal-binding</keyword>
<keyword id="KW-1185">Reference proteome</keyword>
<keyword id="KW-0862">Zinc</keyword>
<keyword id="KW-0863">Zinc-finger</keyword>
<dbReference type="EMBL" id="CU928161">
    <property type="protein sequence ID" value="CAR01816.1"/>
    <property type="molecule type" value="Genomic_DNA"/>
</dbReference>
<dbReference type="RefSeq" id="WP_001195025.1">
    <property type="nucleotide sequence ID" value="NC_011742.1"/>
</dbReference>
<dbReference type="SMR" id="B7MDZ4"/>
<dbReference type="GeneID" id="93776978"/>
<dbReference type="KEGG" id="ecz:ECS88_0469"/>
<dbReference type="HOGENOM" id="CLU_060739_1_2_6"/>
<dbReference type="Proteomes" id="UP000000747">
    <property type="component" value="Chromosome"/>
</dbReference>
<dbReference type="GO" id="GO:0003677">
    <property type="term" value="F:DNA binding"/>
    <property type="evidence" value="ECO:0007669"/>
    <property type="project" value="UniProtKB-UniRule"/>
</dbReference>
<dbReference type="GO" id="GO:0008270">
    <property type="term" value="F:zinc ion binding"/>
    <property type="evidence" value="ECO:0007669"/>
    <property type="project" value="UniProtKB-KW"/>
</dbReference>
<dbReference type="GO" id="GO:0006310">
    <property type="term" value="P:DNA recombination"/>
    <property type="evidence" value="ECO:0007669"/>
    <property type="project" value="UniProtKB-UniRule"/>
</dbReference>
<dbReference type="GO" id="GO:0006281">
    <property type="term" value="P:DNA repair"/>
    <property type="evidence" value="ECO:0007669"/>
    <property type="project" value="UniProtKB-UniRule"/>
</dbReference>
<dbReference type="CDD" id="cd01025">
    <property type="entry name" value="TOPRIM_recR"/>
    <property type="match status" value="1"/>
</dbReference>
<dbReference type="FunFam" id="1.10.8.420:FF:000001">
    <property type="entry name" value="Recombination protein RecR"/>
    <property type="match status" value="1"/>
</dbReference>
<dbReference type="FunFam" id="3.40.1360.10:FF:000001">
    <property type="entry name" value="Recombination protein RecR"/>
    <property type="match status" value="1"/>
</dbReference>
<dbReference type="Gene3D" id="3.40.1360.10">
    <property type="match status" value="1"/>
</dbReference>
<dbReference type="Gene3D" id="6.10.250.240">
    <property type="match status" value="1"/>
</dbReference>
<dbReference type="Gene3D" id="1.10.8.420">
    <property type="entry name" value="RecR Domain 1"/>
    <property type="match status" value="1"/>
</dbReference>
<dbReference type="HAMAP" id="MF_00017">
    <property type="entry name" value="RecR"/>
    <property type="match status" value="1"/>
</dbReference>
<dbReference type="InterPro" id="IPR000093">
    <property type="entry name" value="DNA_Rcmb_RecR"/>
</dbReference>
<dbReference type="InterPro" id="IPR023627">
    <property type="entry name" value="Rcmb_RecR"/>
</dbReference>
<dbReference type="InterPro" id="IPR015967">
    <property type="entry name" value="Rcmb_RecR_Znf"/>
</dbReference>
<dbReference type="InterPro" id="IPR006171">
    <property type="entry name" value="TOPRIM_dom"/>
</dbReference>
<dbReference type="InterPro" id="IPR034137">
    <property type="entry name" value="TOPRIM_RecR"/>
</dbReference>
<dbReference type="NCBIfam" id="TIGR00615">
    <property type="entry name" value="recR"/>
    <property type="match status" value="1"/>
</dbReference>
<dbReference type="PANTHER" id="PTHR30446">
    <property type="entry name" value="RECOMBINATION PROTEIN RECR"/>
    <property type="match status" value="1"/>
</dbReference>
<dbReference type="PANTHER" id="PTHR30446:SF0">
    <property type="entry name" value="RECOMBINATION PROTEIN RECR"/>
    <property type="match status" value="1"/>
</dbReference>
<dbReference type="Pfam" id="PF21175">
    <property type="entry name" value="RecR_C"/>
    <property type="match status" value="1"/>
</dbReference>
<dbReference type="Pfam" id="PF21176">
    <property type="entry name" value="RecR_HhH"/>
    <property type="match status" value="1"/>
</dbReference>
<dbReference type="Pfam" id="PF02132">
    <property type="entry name" value="RecR_ZnF"/>
    <property type="match status" value="1"/>
</dbReference>
<dbReference type="Pfam" id="PF13662">
    <property type="entry name" value="Toprim_4"/>
    <property type="match status" value="1"/>
</dbReference>
<dbReference type="SMART" id="SM00493">
    <property type="entry name" value="TOPRIM"/>
    <property type="match status" value="1"/>
</dbReference>
<dbReference type="SUPFAM" id="SSF111304">
    <property type="entry name" value="Recombination protein RecR"/>
    <property type="match status" value="1"/>
</dbReference>
<dbReference type="PROSITE" id="PS01300">
    <property type="entry name" value="RECR"/>
    <property type="match status" value="1"/>
</dbReference>
<dbReference type="PROSITE" id="PS50880">
    <property type="entry name" value="TOPRIM"/>
    <property type="match status" value="1"/>
</dbReference>
<feature type="chain" id="PRO_1000195386" description="Recombination protein RecR">
    <location>
        <begin position="1"/>
        <end position="201"/>
    </location>
</feature>
<feature type="domain" description="Toprim" evidence="1">
    <location>
        <begin position="81"/>
        <end position="176"/>
    </location>
</feature>
<feature type="zinc finger region" description="C4-type" evidence="1">
    <location>
        <begin position="57"/>
        <end position="72"/>
    </location>
</feature>
<comment type="function">
    <text evidence="1">May play a role in DNA repair. It seems to be involved in an RecBC-independent recombinational process of DNA repair. It may act with RecF and RecO.</text>
</comment>
<comment type="similarity">
    <text evidence="1">Belongs to the RecR family.</text>
</comment>
<reference key="1">
    <citation type="journal article" date="2009" name="PLoS Genet.">
        <title>Organised genome dynamics in the Escherichia coli species results in highly diverse adaptive paths.</title>
        <authorList>
            <person name="Touchon M."/>
            <person name="Hoede C."/>
            <person name="Tenaillon O."/>
            <person name="Barbe V."/>
            <person name="Baeriswyl S."/>
            <person name="Bidet P."/>
            <person name="Bingen E."/>
            <person name="Bonacorsi S."/>
            <person name="Bouchier C."/>
            <person name="Bouvet O."/>
            <person name="Calteau A."/>
            <person name="Chiapello H."/>
            <person name="Clermont O."/>
            <person name="Cruveiller S."/>
            <person name="Danchin A."/>
            <person name="Diard M."/>
            <person name="Dossat C."/>
            <person name="Karoui M.E."/>
            <person name="Frapy E."/>
            <person name="Garry L."/>
            <person name="Ghigo J.M."/>
            <person name="Gilles A.M."/>
            <person name="Johnson J."/>
            <person name="Le Bouguenec C."/>
            <person name="Lescat M."/>
            <person name="Mangenot S."/>
            <person name="Martinez-Jehanne V."/>
            <person name="Matic I."/>
            <person name="Nassif X."/>
            <person name="Oztas S."/>
            <person name="Petit M.A."/>
            <person name="Pichon C."/>
            <person name="Rouy Z."/>
            <person name="Ruf C.S."/>
            <person name="Schneider D."/>
            <person name="Tourret J."/>
            <person name="Vacherie B."/>
            <person name="Vallenet D."/>
            <person name="Medigue C."/>
            <person name="Rocha E.P.C."/>
            <person name="Denamur E."/>
        </authorList>
    </citation>
    <scope>NUCLEOTIDE SEQUENCE [LARGE SCALE GENOMIC DNA]</scope>
    <source>
        <strain>S88 / ExPEC</strain>
    </source>
</reference>
<evidence type="ECO:0000255" key="1">
    <source>
        <dbReference type="HAMAP-Rule" id="MF_00017"/>
    </source>
</evidence>
<proteinExistence type="inferred from homology"/>